<evidence type="ECO:0000255" key="1">
    <source>
        <dbReference type="HAMAP-Rule" id="MF_01365"/>
    </source>
</evidence>
<evidence type="ECO:0000305" key="2"/>
<dbReference type="EMBL" id="CP001344">
    <property type="protein sequence ID" value="ACL43683.1"/>
    <property type="molecule type" value="Genomic_DNA"/>
</dbReference>
<dbReference type="SMR" id="B8HMR8"/>
<dbReference type="STRING" id="395961.Cyan7425_1306"/>
<dbReference type="KEGG" id="cyn:Cyan7425_1306"/>
<dbReference type="eggNOG" id="COG0097">
    <property type="taxonomic scope" value="Bacteria"/>
</dbReference>
<dbReference type="HOGENOM" id="CLU_065464_1_2_3"/>
<dbReference type="OrthoDB" id="9805007at2"/>
<dbReference type="GO" id="GO:0022625">
    <property type="term" value="C:cytosolic large ribosomal subunit"/>
    <property type="evidence" value="ECO:0007669"/>
    <property type="project" value="TreeGrafter"/>
</dbReference>
<dbReference type="GO" id="GO:0019843">
    <property type="term" value="F:rRNA binding"/>
    <property type="evidence" value="ECO:0007669"/>
    <property type="project" value="UniProtKB-UniRule"/>
</dbReference>
<dbReference type="GO" id="GO:0003735">
    <property type="term" value="F:structural constituent of ribosome"/>
    <property type="evidence" value="ECO:0007669"/>
    <property type="project" value="InterPro"/>
</dbReference>
<dbReference type="GO" id="GO:0002181">
    <property type="term" value="P:cytoplasmic translation"/>
    <property type="evidence" value="ECO:0007669"/>
    <property type="project" value="TreeGrafter"/>
</dbReference>
<dbReference type="FunFam" id="3.90.930.12:FF:000002">
    <property type="entry name" value="50S ribosomal protein L6"/>
    <property type="match status" value="1"/>
</dbReference>
<dbReference type="Gene3D" id="3.90.930.12">
    <property type="entry name" value="Ribosomal protein L6, alpha-beta domain"/>
    <property type="match status" value="2"/>
</dbReference>
<dbReference type="HAMAP" id="MF_01365_B">
    <property type="entry name" value="Ribosomal_uL6_B"/>
    <property type="match status" value="1"/>
</dbReference>
<dbReference type="InterPro" id="IPR000702">
    <property type="entry name" value="Ribosomal_uL6-like"/>
</dbReference>
<dbReference type="InterPro" id="IPR036789">
    <property type="entry name" value="Ribosomal_uL6-like_a/b-dom_sf"/>
</dbReference>
<dbReference type="InterPro" id="IPR020040">
    <property type="entry name" value="Ribosomal_uL6_a/b-dom"/>
</dbReference>
<dbReference type="InterPro" id="IPR019906">
    <property type="entry name" value="Ribosomal_uL6_bac-type"/>
</dbReference>
<dbReference type="NCBIfam" id="TIGR03654">
    <property type="entry name" value="L6_bact"/>
    <property type="match status" value="1"/>
</dbReference>
<dbReference type="PANTHER" id="PTHR11655">
    <property type="entry name" value="60S/50S RIBOSOMAL PROTEIN L6/L9"/>
    <property type="match status" value="1"/>
</dbReference>
<dbReference type="PANTHER" id="PTHR11655:SF14">
    <property type="entry name" value="LARGE RIBOSOMAL SUBUNIT PROTEIN UL6M"/>
    <property type="match status" value="1"/>
</dbReference>
<dbReference type="Pfam" id="PF00347">
    <property type="entry name" value="Ribosomal_L6"/>
    <property type="match status" value="2"/>
</dbReference>
<dbReference type="PIRSF" id="PIRSF002162">
    <property type="entry name" value="Ribosomal_L6"/>
    <property type="match status" value="1"/>
</dbReference>
<dbReference type="PRINTS" id="PR00059">
    <property type="entry name" value="RIBOSOMALL6"/>
</dbReference>
<dbReference type="SUPFAM" id="SSF56053">
    <property type="entry name" value="Ribosomal protein L6"/>
    <property type="match status" value="2"/>
</dbReference>
<accession>B8HMR8</accession>
<feature type="chain" id="PRO_1000166804" description="Large ribosomal subunit protein uL6">
    <location>
        <begin position="1"/>
        <end position="191"/>
    </location>
</feature>
<protein>
    <recommendedName>
        <fullName evidence="1">Large ribosomal subunit protein uL6</fullName>
    </recommendedName>
    <alternativeName>
        <fullName evidence="2">50S ribosomal protein L6</fullName>
    </alternativeName>
</protein>
<proteinExistence type="inferred from homology"/>
<gene>
    <name evidence="1" type="primary">rplF</name>
    <name evidence="1" type="synonym">rpl6</name>
    <name type="ordered locus">Cyan7425_1306</name>
</gene>
<name>RL6_CYAP4</name>
<organism>
    <name type="scientific">Cyanothece sp. (strain PCC 7425 / ATCC 29141)</name>
    <dbReference type="NCBI Taxonomy" id="395961"/>
    <lineage>
        <taxon>Bacteria</taxon>
        <taxon>Bacillati</taxon>
        <taxon>Cyanobacteriota</taxon>
        <taxon>Cyanophyceae</taxon>
        <taxon>Gomontiellales</taxon>
        <taxon>Cyanothecaceae</taxon>
        <taxon>Cyanothece</taxon>
    </lineage>
</organism>
<comment type="function">
    <text evidence="1">This protein binds to the 23S rRNA, and is important in its secondary structure. It is located near the subunit interface in the base of the L7/L12 stalk, and near the tRNA binding site of the peptidyltransferase center.</text>
</comment>
<comment type="subunit">
    <text evidence="1">Part of the 50S ribosomal subunit.</text>
</comment>
<comment type="similarity">
    <text evidence="1">Belongs to the universal ribosomal protein uL6 family.</text>
</comment>
<keyword id="KW-0687">Ribonucleoprotein</keyword>
<keyword id="KW-0689">Ribosomal protein</keyword>
<keyword id="KW-0694">RNA-binding</keyword>
<keyword id="KW-0699">rRNA-binding</keyword>
<reference key="1">
    <citation type="journal article" date="2011" name="MBio">
        <title>Novel metabolic attributes of the genus Cyanothece, comprising a group of unicellular nitrogen-fixing Cyanobacteria.</title>
        <authorList>
            <person name="Bandyopadhyay A."/>
            <person name="Elvitigala T."/>
            <person name="Welsh E."/>
            <person name="Stockel J."/>
            <person name="Liberton M."/>
            <person name="Min H."/>
            <person name="Sherman L.A."/>
            <person name="Pakrasi H.B."/>
        </authorList>
    </citation>
    <scope>NUCLEOTIDE SEQUENCE [LARGE SCALE GENOMIC DNA]</scope>
    <source>
        <strain>PCC 7425 / ATCC 29141</strain>
    </source>
</reference>
<sequence length="191" mass="20599">MSRIGKRPIPIPDKVAVTIDGSTVKVKGPKGELSQVLPPEVVVVQENSSLLVNRRDDSRPARQRHGLSRTLVANMVKGVTEGFRKNMQIVGVGYRLQVTGNKLAITAGYSHPVEIDLPKGISVEVDQKAVPIANSKSQQGFNFGVIGIDKQAVGDVAALIRAVRPLEPYKGKGIRYATETLRLKAGKTGKK</sequence>